<protein>
    <recommendedName>
        <fullName evidence="4">Glucanase inhibitor protein 2</fullName>
    </recommendedName>
</protein>
<dbReference type="EMBL" id="AF406608">
    <property type="protein sequence ID" value="AAL11721.1"/>
    <property type="molecule type" value="mRNA"/>
</dbReference>
<dbReference type="RefSeq" id="XP_009538335.1">
    <property type="nucleotide sequence ID" value="XM_009540040.1"/>
</dbReference>
<dbReference type="RefSeq" id="XP_009538340.1">
    <property type="nucleotide sequence ID" value="XM_009540045.1"/>
</dbReference>
<dbReference type="SMR" id="Q945T9"/>
<dbReference type="GlyCosmos" id="Q945T9">
    <property type="glycosylation" value="3 sites, No reported glycans"/>
</dbReference>
<dbReference type="KEGG" id="psoj:PHYSODRAFT_532115"/>
<dbReference type="KEGG" id="psoj:PHYSODRAFT_532438"/>
<dbReference type="VEuPathDB" id="FungiDB:PHYSODRAFT_532115"/>
<dbReference type="VEuPathDB" id="FungiDB:PHYSODRAFT_532438"/>
<dbReference type="HOGENOM" id="CLU_006842_7_3_1"/>
<dbReference type="OMA" id="WAEETMA"/>
<dbReference type="OrthoDB" id="10066789at2759"/>
<dbReference type="PHI-base" id="PHI:653"/>
<dbReference type="GO" id="GO:0005576">
    <property type="term" value="C:extracellular region"/>
    <property type="evidence" value="ECO:0007669"/>
    <property type="project" value="UniProtKB-SubCell"/>
</dbReference>
<dbReference type="GO" id="GO:0004252">
    <property type="term" value="F:serine-type endopeptidase activity"/>
    <property type="evidence" value="ECO:0007669"/>
    <property type="project" value="InterPro"/>
</dbReference>
<dbReference type="GO" id="GO:0006508">
    <property type="term" value="P:proteolysis"/>
    <property type="evidence" value="ECO:0007669"/>
    <property type="project" value="InterPro"/>
</dbReference>
<dbReference type="CDD" id="cd00190">
    <property type="entry name" value="Tryp_SPc"/>
    <property type="match status" value="1"/>
</dbReference>
<dbReference type="FunFam" id="2.40.10.10:FF:000156">
    <property type="entry name" value="MIP06385p"/>
    <property type="match status" value="1"/>
</dbReference>
<dbReference type="Gene3D" id="2.40.10.10">
    <property type="entry name" value="Trypsin-like serine proteases"/>
    <property type="match status" value="1"/>
</dbReference>
<dbReference type="InterPro" id="IPR050430">
    <property type="entry name" value="Peptidase_S1"/>
</dbReference>
<dbReference type="InterPro" id="IPR009003">
    <property type="entry name" value="Peptidase_S1_PA"/>
</dbReference>
<dbReference type="InterPro" id="IPR043504">
    <property type="entry name" value="Peptidase_S1_PA_chymotrypsin"/>
</dbReference>
<dbReference type="InterPro" id="IPR001314">
    <property type="entry name" value="Peptidase_S1A"/>
</dbReference>
<dbReference type="InterPro" id="IPR001254">
    <property type="entry name" value="Trypsin_dom"/>
</dbReference>
<dbReference type="PANTHER" id="PTHR24276:SF98">
    <property type="entry name" value="FI18310P1-RELATED"/>
    <property type="match status" value="1"/>
</dbReference>
<dbReference type="PANTHER" id="PTHR24276">
    <property type="entry name" value="POLYSERASE-RELATED"/>
    <property type="match status" value="1"/>
</dbReference>
<dbReference type="Pfam" id="PF00089">
    <property type="entry name" value="Trypsin"/>
    <property type="match status" value="1"/>
</dbReference>
<dbReference type="PRINTS" id="PR00722">
    <property type="entry name" value="CHYMOTRYPSIN"/>
</dbReference>
<dbReference type="SMART" id="SM00020">
    <property type="entry name" value="Tryp_SPc"/>
    <property type="match status" value="1"/>
</dbReference>
<dbReference type="SUPFAM" id="SSF50494">
    <property type="entry name" value="Trypsin-like serine proteases"/>
    <property type="match status" value="1"/>
</dbReference>
<dbReference type="PROSITE" id="PS50240">
    <property type="entry name" value="TRYPSIN_DOM"/>
    <property type="match status" value="1"/>
</dbReference>
<name>GIP2_PHYSO</name>
<feature type="signal peptide" evidence="1">
    <location>
        <begin position="1"/>
        <end position="19"/>
    </location>
</feature>
<feature type="chain" id="PRO_5004319475" description="Glucanase inhibitor protein 2" evidence="1">
    <location>
        <begin position="20"/>
        <end position="289"/>
    </location>
</feature>
<feature type="domain" description="Peptidase S1" evidence="2">
    <location>
        <begin position="29"/>
        <end position="257"/>
    </location>
</feature>
<feature type="glycosylation site" description="N-linked (GlcNAc...) asparagine" evidence="3">
    <location>
        <position position="89"/>
    </location>
</feature>
<feature type="glycosylation site" description="N-linked (GlcNAc...) asparagine" evidence="3">
    <location>
        <position position="104"/>
    </location>
</feature>
<feature type="glycosylation site" description="N-linked (GlcNAc...) asparagine" evidence="3">
    <location>
        <position position="109"/>
    </location>
</feature>
<feature type="disulfide bond" evidence="2">
    <location>
        <begin position="56"/>
        <end position="72"/>
    </location>
</feature>
<feature type="disulfide bond" evidence="2">
    <location>
        <begin position="180"/>
        <end position="192"/>
    </location>
</feature>
<feature type="disulfide bond" evidence="2">
    <location>
        <begin position="202"/>
        <end position="233"/>
    </location>
</feature>
<comment type="function">
    <text evidence="6">Secreted effector that suppresses host plant glucan elicitor-mediated defense responses (Probable). Targets host endoglucanases and inhibits the endoglucanase-mediated release of elicitor-active glucan oligosaccharides from P.sojae cell walls (Probable).</text>
</comment>
<comment type="subcellular location">
    <subcellularLocation>
        <location evidence="6">Secreted</location>
    </subcellularLocation>
</comment>
<comment type="similarity">
    <text evidence="5">Belongs to the peptidase S1 family.</text>
</comment>
<comment type="caution">
    <text evidence="6">None of the predicted glucanase inhibitor proteins (GIPS) has an intact catalytic triad, therefore, GIPs are proteolytically inactive.</text>
</comment>
<sequence>MKVTATIAAASMAIAAASADADTTSRQLILGGSIIPSGQKTYSVGIRSTAGGDTYCGGALISPTHVLTTTMCTKHAKPDFVAVGTHYVNGTKDGEQLKVIQAQNHTDFNKTGNGEYDFALLTLEKPSKFAPVKLPKADDSDIKPGMWSKAMGWGWTSFPNGSPSNEMQGVNLQVWSNEDCSQVYVINPTNVCAGGVAGKDACVADTGGPLIKENGAGDKDDVLIGLVNWGYGCGDEGAPTVYSRVSSALKWVNPIIKTKQVKTAVPVQQAISGKHGVPIKQGMPGTVRN</sequence>
<keyword id="KW-1015">Disulfide bond</keyword>
<keyword id="KW-0325">Glycoprotein</keyword>
<keyword id="KW-0964">Secreted</keyword>
<keyword id="KW-0732">Signal</keyword>
<keyword id="KW-0843">Virulence</keyword>
<accession>Q945T9</accession>
<evidence type="ECO:0000255" key="1"/>
<evidence type="ECO:0000255" key="2">
    <source>
        <dbReference type="PROSITE-ProRule" id="PRU00274"/>
    </source>
</evidence>
<evidence type="ECO:0000255" key="3">
    <source>
        <dbReference type="PROSITE-ProRule" id="PRU00498"/>
    </source>
</evidence>
<evidence type="ECO:0000303" key="4">
    <source>
    </source>
</evidence>
<evidence type="ECO:0000305" key="5"/>
<evidence type="ECO:0000305" key="6">
    <source>
    </source>
</evidence>
<proteinExistence type="evidence at transcript level"/>
<organism>
    <name type="scientific">Phytophthora sojae</name>
    <name type="common">Soybean stem and root rot agent</name>
    <name type="synonym">Phytophthora megasperma f. sp. glycines</name>
    <dbReference type="NCBI Taxonomy" id="67593"/>
    <lineage>
        <taxon>Eukaryota</taxon>
        <taxon>Sar</taxon>
        <taxon>Stramenopiles</taxon>
        <taxon>Oomycota</taxon>
        <taxon>Peronosporales</taxon>
        <taxon>Peronosporaceae</taxon>
        <taxon>Phytophthora</taxon>
    </lineage>
</organism>
<reference key="1">
    <citation type="journal article" date="2002" name="Plant Cell">
        <title>Molecular cloning and characterization of glucanase inhibitor proteins: coevolution of a counterdefense mechanism by plant pathogens.</title>
        <authorList>
            <person name="Rose J.K."/>
            <person name="Ham K.S."/>
            <person name="Darvill A.G."/>
            <person name="Albersheim P."/>
        </authorList>
    </citation>
    <scope>NUCLEOTIDE SEQUENCE [MRNA]</scope>
    <scope>IDENTIFICATION</scope>
    <source>
        <strain>Race1</strain>
    </source>
</reference>
<gene>
    <name evidence="4" type="primary">GIP2</name>
</gene>